<reference key="1">
    <citation type="submission" date="2002-03" db="EMBL/GenBank/DDBJ databases">
        <title>Phylogeny of the North American pines.</title>
        <authorList>
            <person name="Geada Lopez G."/>
            <person name="Kamiya K."/>
            <person name="Harada K."/>
        </authorList>
    </citation>
    <scope>NUCLEOTIDE SEQUENCE [GENOMIC DNA]</scope>
    <source>
        <tissue>Leaf</tissue>
    </source>
</reference>
<protein>
    <recommendedName>
        <fullName evidence="1">Maturase K</fullName>
    </recommendedName>
    <alternativeName>
        <fullName evidence="1">Intron maturase</fullName>
    </alternativeName>
</protein>
<proteinExistence type="inferred from homology"/>
<accession>Q8HQT1</accession>
<organism>
    <name type="scientific">Pinus attenuata</name>
    <name type="common">Knobcone pine</name>
    <dbReference type="NCBI Taxonomy" id="71624"/>
    <lineage>
        <taxon>Eukaryota</taxon>
        <taxon>Viridiplantae</taxon>
        <taxon>Streptophyta</taxon>
        <taxon>Embryophyta</taxon>
        <taxon>Tracheophyta</taxon>
        <taxon>Spermatophyta</taxon>
        <taxon>Pinopsida</taxon>
        <taxon>Pinidae</taxon>
        <taxon>Conifers I</taxon>
        <taxon>Pinales</taxon>
        <taxon>Pinaceae</taxon>
        <taxon>Pinus</taxon>
        <taxon>Pinus subgen. Pinus</taxon>
    </lineage>
</organism>
<gene>
    <name evidence="1" type="primary">matK</name>
</gene>
<geneLocation type="chloroplast"/>
<sequence>MDEFHRCGKEDSFWQQCFLYPLFFQEDLYAISHDHYLDVSSSSRPMEHLSSNDQLSFLTVKRLIGQIRQQNHSIVLFVNCDPNPLADRKKSFYSESVLEALTLVLEVPFSIWSKYSVEGMNESKSFRSIHSIFPFLEDKFPHSNSILDARIPYSIHPEILVRTFRRWIRDAPSLHPLRSVLYEYRNSPDNLQRSIIVVPRVNTRFFLFLWNYYVCECESILFSRLKRSSHSRSLSHGSFPQRTHFHRKIKHIIIFSRRNSLKSIWSLKDPKIHYVRYGERPIIAIKGAHLLVKKCRYYLLIFRQFYFHLWSEPYRVCSHQLSKNCSSSLGYFLRVRMNPILVRTKMLDELFIADLITDEIDPIVPIVPIIGLLATEKFCDISGRPISKLSWTSLTDDDILDRFDQIWRNLFHYYSGSFDRDGLYRIKYILSLSCAKTLACKHKSTIRVVRKELGPELFKKSFSKEREFYSLRFSSKAAARSQRERIWHSDIPQINPLANSWQKIQDLKIENLFDQ</sequence>
<keyword id="KW-0150">Chloroplast</keyword>
<keyword id="KW-0507">mRNA processing</keyword>
<keyword id="KW-0934">Plastid</keyword>
<keyword id="KW-0694">RNA-binding</keyword>
<keyword id="KW-0819">tRNA processing</keyword>
<comment type="function">
    <text evidence="1">Usually encoded in the trnK tRNA gene intron. Probably assists in splicing its own and other chloroplast group II introns.</text>
</comment>
<comment type="subcellular location">
    <subcellularLocation>
        <location>Plastid</location>
        <location>Chloroplast</location>
    </subcellularLocation>
</comment>
<comment type="similarity">
    <text evidence="1">Belongs to the intron maturase 2 family. MatK subfamily.</text>
</comment>
<name>MATK_PINAT</name>
<dbReference type="EMBL" id="AB080933">
    <property type="protein sequence ID" value="BAC11936.1"/>
    <property type="molecule type" value="Genomic_DNA"/>
</dbReference>
<dbReference type="GO" id="GO:0009507">
    <property type="term" value="C:chloroplast"/>
    <property type="evidence" value="ECO:0007669"/>
    <property type="project" value="UniProtKB-SubCell"/>
</dbReference>
<dbReference type="GO" id="GO:0003723">
    <property type="term" value="F:RNA binding"/>
    <property type="evidence" value="ECO:0007669"/>
    <property type="project" value="UniProtKB-KW"/>
</dbReference>
<dbReference type="GO" id="GO:0006397">
    <property type="term" value="P:mRNA processing"/>
    <property type="evidence" value="ECO:0007669"/>
    <property type="project" value="UniProtKB-KW"/>
</dbReference>
<dbReference type="GO" id="GO:0008380">
    <property type="term" value="P:RNA splicing"/>
    <property type="evidence" value="ECO:0007669"/>
    <property type="project" value="UniProtKB-UniRule"/>
</dbReference>
<dbReference type="GO" id="GO:0008033">
    <property type="term" value="P:tRNA processing"/>
    <property type="evidence" value="ECO:0007669"/>
    <property type="project" value="UniProtKB-KW"/>
</dbReference>
<dbReference type="HAMAP" id="MF_01390">
    <property type="entry name" value="MatK"/>
    <property type="match status" value="1"/>
</dbReference>
<dbReference type="InterPro" id="IPR024937">
    <property type="entry name" value="Domain_X"/>
</dbReference>
<dbReference type="InterPro" id="IPR002866">
    <property type="entry name" value="Maturase_MatK"/>
</dbReference>
<dbReference type="InterPro" id="IPR024942">
    <property type="entry name" value="Maturase_MatK_N"/>
</dbReference>
<dbReference type="PANTHER" id="PTHR34811">
    <property type="entry name" value="MATURASE K"/>
    <property type="match status" value="1"/>
</dbReference>
<dbReference type="PANTHER" id="PTHR34811:SF1">
    <property type="entry name" value="MATURASE K"/>
    <property type="match status" value="1"/>
</dbReference>
<dbReference type="Pfam" id="PF01348">
    <property type="entry name" value="Intron_maturas2"/>
    <property type="match status" value="1"/>
</dbReference>
<dbReference type="Pfam" id="PF01824">
    <property type="entry name" value="MatK_N"/>
    <property type="match status" value="1"/>
</dbReference>
<evidence type="ECO:0000255" key="1">
    <source>
        <dbReference type="HAMAP-Rule" id="MF_01390"/>
    </source>
</evidence>
<feature type="chain" id="PRO_0000143604" description="Maturase K">
    <location>
        <begin position="1"/>
        <end position="515"/>
    </location>
</feature>